<dbReference type="EMBL" id="KC905459">
    <property type="protein sequence ID" value="AGR45600.1"/>
    <property type="molecule type" value="Genomic_DNA"/>
</dbReference>
<dbReference type="PDB" id="4LM6">
    <property type="method" value="X-ray"/>
    <property type="resolution" value="1.70 A"/>
    <property type="chains" value="B/D=1-177"/>
</dbReference>
<dbReference type="PDBsum" id="4LM6"/>
<dbReference type="SMR" id="A0A075B5G2"/>
<dbReference type="EvolutionaryTrace" id="A0A075B5G2"/>
<dbReference type="GO" id="GO:0009535">
    <property type="term" value="C:chloroplast thylakoid membrane"/>
    <property type="evidence" value="ECO:0007669"/>
    <property type="project" value="UniProtKB-SubCell"/>
</dbReference>
<dbReference type="GO" id="GO:0030089">
    <property type="term" value="C:phycobilisome"/>
    <property type="evidence" value="ECO:0007669"/>
    <property type="project" value="InterPro"/>
</dbReference>
<dbReference type="GO" id="GO:0015979">
    <property type="term" value="P:photosynthesis"/>
    <property type="evidence" value="ECO:0007669"/>
    <property type="project" value="UniProtKB-KW"/>
</dbReference>
<dbReference type="Gene3D" id="1.10.490.20">
    <property type="entry name" value="Phycocyanins"/>
    <property type="match status" value="1"/>
</dbReference>
<dbReference type="InterPro" id="IPR009050">
    <property type="entry name" value="Globin-like_sf"/>
</dbReference>
<dbReference type="InterPro" id="IPR012128">
    <property type="entry name" value="Phycobilisome_asu/bsu"/>
</dbReference>
<dbReference type="InterPro" id="IPR038719">
    <property type="entry name" value="Phycobilisome_asu/bsu_sf"/>
</dbReference>
<dbReference type="PANTHER" id="PTHR34011:SF7">
    <property type="entry name" value="C-PHYCOCYANIN BETA SUBUNIT"/>
    <property type="match status" value="1"/>
</dbReference>
<dbReference type="PANTHER" id="PTHR34011">
    <property type="entry name" value="PHYCOBILISOME 32.1 KDA LINKER POLYPEPTIDE, PHYCOCYANIN-ASSOCIATED, ROD 2-RELATED"/>
    <property type="match status" value="1"/>
</dbReference>
<dbReference type="Pfam" id="PF00502">
    <property type="entry name" value="Phycobilisome"/>
    <property type="match status" value="1"/>
</dbReference>
<dbReference type="PIRSF" id="PIRSF000081">
    <property type="entry name" value="Phycocyanin"/>
    <property type="match status" value="1"/>
</dbReference>
<dbReference type="SUPFAM" id="SSF46458">
    <property type="entry name" value="Globin-like"/>
    <property type="match status" value="1"/>
</dbReference>
<proteinExistence type="evidence at protein level"/>
<protein>
    <recommendedName>
        <fullName evidence="3">Phycoerythrin beta subunit</fullName>
    </recommendedName>
</protein>
<comment type="function">
    <text evidence="2">Light-harvesting photosynthetic bile pigment-protein from the phycobiliprotein complex.</text>
</comment>
<comment type="subunit">
    <text evidence="1">Heterotetramer of 2 identical alpha chains and 2 identical beta chains which form 2 alpha-beta heterodimers within the heterotetramer. The two alpha-beta heterodimers are rotated to an open configuration in contrast to the closed configuration found in other cryptophyte species due to the insertion of a single amino acid, 'Asp-65', in a conserved region of the alpha chain. In the open form, the central chromophores are not in physical contact but are separated by a water-filled channel.</text>
</comment>
<comment type="subcellular location">
    <subcellularLocation>
        <location evidence="2">Plastid</location>
        <location evidence="2">Chloroplast thylakoid membrane</location>
        <topology evidence="2">Peripheral membrane protein</topology>
        <orientation evidence="2">Lumenal side</orientation>
    </subcellularLocation>
</comment>
<comment type="PTM">
    <text evidence="1">Contains three phycocyanobilin chromophores and one 15,16-dihydrobiliverdin chromophore with binding of the phycocyanobilin chromophores mediated by both the alpha and beta subunits.</text>
</comment>
<comment type="miscellaneous">
    <text evidence="2">The light-harvesting system in Cryptophytes contains phycobiliprotein complexes. Unusually they are composed of either phycoerythrin (CPE) or phycocyanin (CPC) but never allophycocyanin (APC), with only one type of biliprotein being present in any one species. Unlike cyanobacteria or red algae these proteins are not arranged into higher-order phycobilisome complexes, and they are found in the thylakoid lumen.</text>
</comment>
<comment type="similarity">
    <text evidence="2">Belongs to the phycobiliprotein family.</text>
</comment>
<reference evidence="3 4" key="1">
    <citation type="journal article" date="2014" name="Proc. Natl. Acad. Sci. U.S.A.">
        <title>Single-residue insertion switches the quaternary structure and exciton states of cryptophyte light-harvesting proteins.</title>
        <authorList>
            <person name="Harrop S.J."/>
            <person name="Wilk K.E."/>
            <person name="Dinshaw R."/>
            <person name="Collini E."/>
            <person name="Mirkovic T."/>
            <person name="Teng C.Y."/>
            <person name="Oblinsky D.G."/>
            <person name="Green B.R."/>
            <person name="Hoef-Emden K."/>
            <person name="Hiller R.G."/>
            <person name="Scholes G.D."/>
            <person name="Curmi P.M."/>
        </authorList>
    </citation>
    <scope>NUCLEOTIDE SEQUENCE [MRNA]</scope>
    <scope>X-RAY CRYSTALLOGRAPHY (1.70 ANGSTROMS) IN COMPLEX WITH 15,16-DIHYDROBILIVERDIN AND PHYCOCYANOBILIN</scope>
    <scope>SUBUNIT</scope>
</reference>
<evidence type="ECO:0000269" key="1">
    <source>
    </source>
</evidence>
<evidence type="ECO:0000305" key="2"/>
<evidence type="ECO:0000312" key="3">
    <source>
        <dbReference type="EMBL" id="AGR45600.1"/>
    </source>
</evidence>
<evidence type="ECO:0007744" key="4">
    <source>
        <dbReference type="PDB" id="4LM6"/>
    </source>
</evidence>
<evidence type="ECO:0007829" key="5">
    <source>
        <dbReference type="PDB" id="4LM6"/>
    </source>
</evidence>
<geneLocation type="chloroplast" evidence="2"/>
<feature type="chain" id="PRO_0000455439" description="Phycoerythrin beta subunit">
    <location>
        <begin position="1"/>
        <end position="177"/>
    </location>
</feature>
<feature type="binding site" evidence="1 4">
    <location>
        <position position="18"/>
    </location>
    <ligand>
        <name>(2R,3E)-phycocyanobilin</name>
        <dbReference type="ChEBI" id="CHEBI:85275"/>
        <label>1</label>
        <note>ligand shared with alpha subunit</note>
    </ligand>
</feature>
<feature type="binding site" evidence="1 4">
    <location>
        <position position="28"/>
    </location>
    <ligand>
        <name>(2R,3E)-phycocyanobilin</name>
        <dbReference type="ChEBI" id="CHEBI:85275"/>
        <label>2</label>
        <note>ligand shared with alpha subunit</note>
    </ligand>
</feature>
<feature type="binding site" evidence="1 4">
    <location>
        <position position="35"/>
    </location>
    <ligand>
        <name>(2R,3E)-phycocyanobilin</name>
        <dbReference type="ChEBI" id="CHEBI:85275"/>
        <label>2</label>
        <note>ligand shared with alpha subunit</note>
    </ligand>
</feature>
<feature type="binding site" evidence="1 4">
    <location>
        <position position="39"/>
    </location>
    <ligand>
        <name>(2R,3E)-phycocyanobilin</name>
        <dbReference type="ChEBI" id="CHEBI:85275"/>
        <label>2</label>
        <note>ligand shared with alpha subunit</note>
    </ligand>
</feature>
<feature type="binding site" description="covalent" evidence="1 4">
    <location>
        <position position="50"/>
    </location>
    <ligand>
        <name>15,16-dihydrobiliverdin</name>
        <dbReference type="ChEBI" id="CHEBI:57899"/>
    </ligand>
</feature>
<feature type="binding site" evidence="1 4">
    <location>
        <position position="54"/>
    </location>
    <ligand>
        <name>15,16-dihydrobiliverdin</name>
        <dbReference type="ChEBI" id="CHEBI:57899"/>
    </ligand>
</feature>
<feature type="binding site" description="covalent" evidence="1 4">
    <location>
        <position position="61"/>
    </location>
    <ligand>
        <name>15,16-dihydrobiliverdin</name>
        <dbReference type="ChEBI" id="CHEBI:57899"/>
    </ligand>
</feature>
<feature type="binding site" evidence="1 4">
    <location>
        <position position="77"/>
    </location>
    <ligand>
        <name>(2R,3E)-phycocyanobilin</name>
        <dbReference type="ChEBI" id="CHEBI:85275"/>
        <label>3</label>
        <note>ligand shared with alpha subunit</note>
    </ligand>
</feature>
<feature type="binding site" description="covalent" evidence="1 4">
    <location>
        <position position="82"/>
    </location>
    <ligand>
        <name>(2R,3E)-phycocyanobilin</name>
        <dbReference type="ChEBI" id="CHEBI:85275"/>
        <label>3</label>
        <note>ligand shared with alpha subunit</note>
    </ligand>
</feature>
<feature type="binding site" evidence="1 4">
    <location>
        <position position="84"/>
    </location>
    <ligand>
        <name>(2R,3E)-phycocyanobilin</name>
        <dbReference type="ChEBI" id="CHEBI:85275"/>
        <label>3</label>
        <note>ligand shared with alpha subunit</note>
    </ligand>
</feature>
<feature type="binding site" evidence="1 4">
    <location>
        <position position="85"/>
    </location>
    <ligand>
        <name>(2R,3E)-phycocyanobilin</name>
        <dbReference type="ChEBI" id="CHEBI:85275"/>
        <label>3</label>
        <note>ligand shared with alpha subunit</note>
    </ligand>
</feature>
<feature type="binding site" evidence="1 4">
    <location>
        <position position="129"/>
    </location>
    <ligand>
        <name>15,16-dihydrobiliverdin</name>
        <dbReference type="ChEBI" id="CHEBI:57899"/>
    </ligand>
</feature>
<feature type="binding site" evidence="1 4">
    <location>
        <position position="148"/>
    </location>
    <ligand>
        <name>15,16-dihydrobiliverdin</name>
        <dbReference type="ChEBI" id="CHEBI:57899"/>
    </ligand>
</feature>
<feature type="binding site" evidence="1 4">
    <location>
        <position position="149"/>
    </location>
    <ligand>
        <name>15,16-dihydrobiliverdin</name>
        <dbReference type="ChEBI" id="CHEBI:57899"/>
    </ligand>
</feature>
<feature type="binding site" evidence="1 4">
    <location>
        <position position="154"/>
    </location>
    <ligand>
        <name>(2R,3E)-phycocyanobilin</name>
        <dbReference type="ChEBI" id="CHEBI:85275"/>
        <label>2</label>
        <note>ligand shared with alpha subunit</note>
    </ligand>
</feature>
<feature type="binding site" evidence="1 4">
    <location>
        <position position="156"/>
    </location>
    <ligand>
        <name>(2R,3E)-phycocyanobilin</name>
        <dbReference type="ChEBI" id="CHEBI:85275"/>
        <label>2</label>
        <note>ligand shared with alpha subunit</note>
    </ligand>
</feature>
<feature type="binding site" description="covalent" evidence="1 4">
    <location>
        <position position="158"/>
    </location>
    <ligand>
        <name>(2R,3E)-phycocyanobilin</name>
        <dbReference type="ChEBI" id="CHEBI:85275"/>
        <label>2</label>
        <note>ligand shared with alpha subunit</note>
    </ligand>
</feature>
<feature type="helix" evidence="5">
    <location>
        <begin position="6"/>
        <end position="11"/>
    </location>
</feature>
<feature type="strand" evidence="5">
    <location>
        <begin position="16"/>
        <end position="19"/>
    </location>
</feature>
<feature type="helix" evidence="5">
    <location>
        <begin position="21"/>
        <end position="30"/>
    </location>
</feature>
<feature type="strand" evidence="5">
    <location>
        <begin position="31"/>
        <end position="33"/>
    </location>
</feature>
<feature type="helix" evidence="5">
    <location>
        <begin position="34"/>
        <end position="45"/>
    </location>
</feature>
<feature type="helix" evidence="5">
    <location>
        <begin position="48"/>
        <end position="62"/>
    </location>
</feature>
<feature type="helix" evidence="5">
    <location>
        <begin position="64"/>
        <end position="67"/>
    </location>
</feature>
<feature type="helix" evidence="5">
    <location>
        <begin position="76"/>
        <end position="99"/>
    </location>
</feature>
<feature type="helix" evidence="5">
    <location>
        <begin position="103"/>
        <end position="108"/>
    </location>
</feature>
<feature type="turn" evidence="5">
    <location>
        <begin position="109"/>
        <end position="112"/>
    </location>
</feature>
<feature type="helix" evidence="5">
    <location>
        <begin position="113"/>
        <end position="120"/>
    </location>
</feature>
<feature type="helix" evidence="5">
    <location>
        <begin position="124"/>
        <end position="142"/>
    </location>
</feature>
<feature type="helix" evidence="5">
    <location>
        <begin position="159"/>
        <end position="176"/>
    </location>
</feature>
<organism>
    <name type="scientific">Hemiselmis virescens</name>
    <dbReference type="NCBI Taxonomy" id="77927"/>
    <lineage>
        <taxon>Eukaryota</taxon>
        <taxon>Cryptophyceae</taxon>
        <taxon>Cryptomonadales</taxon>
        <taxon>Hemiselmidaceae</taxon>
        <taxon>Hemiselmis</taxon>
    </lineage>
</organism>
<sequence length="177" mass="18211">MLDAFSKVITSADGKAAYVGGADLQALKKFVSDGNKRMDAVNAIVSNASCIVSDAVSGMVCENPALIAPNGGVYSNRKMAACLRDAEIILRYVSYSLLSGDSSVLEDRCLNGLKETYASLGVPAAGNARAVAIMKATVNGFINNTAQQKKLSTPAGDCSALASEAGGYFDKVSSALA</sequence>
<name>PHEB_HEMVI</name>
<accession>A0A075B5G2</accession>
<gene>
    <name evidence="3" type="primary">cpeB</name>
</gene>
<keyword id="KW-0002">3D-structure</keyword>
<keyword id="KW-0089">Bile pigment</keyword>
<keyword id="KW-0150">Chloroplast</keyword>
<keyword id="KW-0157">Chromophore</keyword>
<keyword id="KW-0249">Electron transport</keyword>
<keyword id="KW-0472">Membrane</keyword>
<keyword id="KW-0602">Photosynthesis</keyword>
<keyword id="KW-0934">Plastid</keyword>
<keyword id="KW-0793">Thylakoid</keyword>
<keyword id="KW-0813">Transport</keyword>